<proteinExistence type="inferred from homology"/>
<evidence type="ECO:0000255" key="1">
    <source>
        <dbReference type="HAMAP-Rule" id="MF_00634"/>
    </source>
</evidence>
<organism>
    <name type="scientific">Shewanella amazonensis (strain ATCC BAA-1098 / SB2B)</name>
    <dbReference type="NCBI Taxonomy" id="326297"/>
    <lineage>
        <taxon>Bacteria</taxon>
        <taxon>Pseudomonadati</taxon>
        <taxon>Pseudomonadota</taxon>
        <taxon>Gammaproteobacteria</taxon>
        <taxon>Alteromonadales</taxon>
        <taxon>Shewanellaceae</taxon>
        <taxon>Shewanella</taxon>
    </lineage>
</organism>
<keyword id="KW-1185">Reference proteome</keyword>
<accession>A1S8H7</accession>
<reference key="1">
    <citation type="submission" date="2006-12" db="EMBL/GenBank/DDBJ databases">
        <title>Complete sequence of Shewanella amazonensis SB2B.</title>
        <authorList>
            <consortium name="US DOE Joint Genome Institute"/>
            <person name="Copeland A."/>
            <person name="Lucas S."/>
            <person name="Lapidus A."/>
            <person name="Barry K."/>
            <person name="Detter J.C."/>
            <person name="Glavina del Rio T."/>
            <person name="Hammon N."/>
            <person name="Israni S."/>
            <person name="Dalin E."/>
            <person name="Tice H."/>
            <person name="Pitluck S."/>
            <person name="Munk A.C."/>
            <person name="Brettin T."/>
            <person name="Bruce D."/>
            <person name="Han C."/>
            <person name="Tapia R."/>
            <person name="Gilna P."/>
            <person name="Schmutz J."/>
            <person name="Larimer F."/>
            <person name="Land M."/>
            <person name="Hauser L."/>
            <person name="Kyrpides N."/>
            <person name="Mikhailova N."/>
            <person name="Fredrickson J."/>
            <person name="Richardson P."/>
        </authorList>
    </citation>
    <scope>NUCLEOTIDE SEQUENCE [LARGE SCALE GENOMIC DNA]</scope>
    <source>
        <strain>ATCC BAA-1098 / SB2B</strain>
    </source>
</reference>
<protein>
    <recommendedName>
        <fullName evidence="1">UPF0235 protein Sama_2480</fullName>
    </recommendedName>
</protein>
<name>Y2480_SHEAM</name>
<dbReference type="EMBL" id="CP000507">
    <property type="protein sequence ID" value="ABM00684.1"/>
    <property type="molecule type" value="Genomic_DNA"/>
</dbReference>
<dbReference type="RefSeq" id="WP_011760590.1">
    <property type="nucleotide sequence ID" value="NC_008700.1"/>
</dbReference>
<dbReference type="SMR" id="A1S8H7"/>
<dbReference type="STRING" id="326297.Sama_2480"/>
<dbReference type="KEGG" id="saz:Sama_2480"/>
<dbReference type="eggNOG" id="COG1872">
    <property type="taxonomic scope" value="Bacteria"/>
</dbReference>
<dbReference type="HOGENOM" id="CLU_130694_5_0_6"/>
<dbReference type="OrthoDB" id="9800587at2"/>
<dbReference type="Proteomes" id="UP000009175">
    <property type="component" value="Chromosome"/>
</dbReference>
<dbReference type="GO" id="GO:0005737">
    <property type="term" value="C:cytoplasm"/>
    <property type="evidence" value="ECO:0007669"/>
    <property type="project" value="TreeGrafter"/>
</dbReference>
<dbReference type="Gene3D" id="3.30.1200.10">
    <property type="entry name" value="YggU-like"/>
    <property type="match status" value="1"/>
</dbReference>
<dbReference type="HAMAP" id="MF_00634">
    <property type="entry name" value="UPF0235"/>
    <property type="match status" value="1"/>
</dbReference>
<dbReference type="InterPro" id="IPR003746">
    <property type="entry name" value="DUF167"/>
</dbReference>
<dbReference type="InterPro" id="IPR036591">
    <property type="entry name" value="YggU-like_sf"/>
</dbReference>
<dbReference type="NCBIfam" id="TIGR00251">
    <property type="entry name" value="DUF167 family protein"/>
    <property type="match status" value="1"/>
</dbReference>
<dbReference type="NCBIfam" id="NF003466">
    <property type="entry name" value="PRK05090.1"/>
    <property type="match status" value="1"/>
</dbReference>
<dbReference type="PANTHER" id="PTHR13420">
    <property type="entry name" value="UPF0235 PROTEIN C15ORF40"/>
    <property type="match status" value="1"/>
</dbReference>
<dbReference type="PANTHER" id="PTHR13420:SF7">
    <property type="entry name" value="UPF0235 PROTEIN C15ORF40"/>
    <property type="match status" value="1"/>
</dbReference>
<dbReference type="Pfam" id="PF02594">
    <property type="entry name" value="DUF167"/>
    <property type="match status" value="1"/>
</dbReference>
<dbReference type="SMART" id="SM01152">
    <property type="entry name" value="DUF167"/>
    <property type="match status" value="1"/>
</dbReference>
<dbReference type="SUPFAM" id="SSF69786">
    <property type="entry name" value="YggU-like"/>
    <property type="match status" value="1"/>
</dbReference>
<sequence>MSAITRQDEDLLLALYVQPKASRDELVGLHGEELKLAITAPPVDGKANAHICKLLAKAFKVPKGKVSIERGELGRHKLVRIQAPEIIPDDFAQFL</sequence>
<feature type="chain" id="PRO_1000082649" description="UPF0235 protein Sama_2480">
    <location>
        <begin position="1"/>
        <end position="95"/>
    </location>
</feature>
<comment type="similarity">
    <text evidence="1">Belongs to the UPF0235 family.</text>
</comment>
<gene>
    <name type="ordered locus">Sama_2480</name>
</gene>